<accession>Q940G6</accession>
<reference key="1">
    <citation type="journal article" date="2000" name="Nature">
        <title>Sequence and analysis of chromosome 5 of the plant Arabidopsis thaliana.</title>
        <authorList>
            <person name="Tabata S."/>
            <person name="Kaneko T."/>
            <person name="Nakamura Y."/>
            <person name="Kotani H."/>
            <person name="Kato T."/>
            <person name="Asamizu E."/>
            <person name="Miyajima N."/>
            <person name="Sasamoto S."/>
            <person name="Kimura T."/>
            <person name="Hosouchi T."/>
            <person name="Kawashima K."/>
            <person name="Kohara M."/>
            <person name="Matsumoto M."/>
            <person name="Matsuno A."/>
            <person name="Muraki A."/>
            <person name="Nakayama S."/>
            <person name="Nakazaki N."/>
            <person name="Naruo K."/>
            <person name="Okumura S."/>
            <person name="Shinpo S."/>
            <person name="Takeuchi C."/>
            <person name="Wada T."/>
            <person name="Watanabe A."/>
            <person name="Yamada M."/>
            <person name="Yasuda M."/>
            <person name="Sato S."/>
            <person name="de la Bastide M."/>
            <person name="Huang E."/>
            <person name="Spiegel L."/>
            <person name="Gnoj L."/>
            <person name="O'Shaughnessy A."/>
            <person name="Preston R."/>
            <person name="Habermann K."/>
            <person name="Murray J."/>
            <person name="Johnson D."/>
            <person name="Rohlfing T."/>
            <person name="Nelson J."/>
            <person name="Stoneking T."/>
            <person name="Pepin K."/>
            <person name="Spieth J."/>
            <person name="Sekhon M."/>
            <person name="Armstrong J."/>
            <person name="Becker M."/>
            <person name="Belter E."/>
            <person name="Cordum H."/>
            <person name="Cordes M."/>
            <person name="Courtney L."/>
            <person name="Courtney W."/>
            <person name="Dante M."/>
            <person name="Du H."/>
            <person name="Edwards J."/>
            <person name="Fryman J."/>
            <person name="Haakensen B."/>
            <person name="Lamar E."/>
            <person name="Latreille P."/>
            <person name="Leonard S."/>
            <person name="Meyer R."/>
            <person name="Mulvaney E."/>
            <person name="Ozersky P."/>
            <person name="Riley A."/>
            <person name="Strowmatt C."/>
            <person name="Wagner-McPherson C."/>
            <person name="Wollam A."/>
            <person name="Yoakum M."/>
            <person name="Bell M."/>
            <person name="Dedhia N."/>
            <person name="Parnell L."/>
            <person name="Shah R."/>
            <person name="Rodriguez M."/>
            <person name="Hoon See L."/>
            <person name="Vil D."/>
            <person name="Baker J."/>
            <person name="Kirchoff K."/>
            <person name="Toth K."/>
            <person name="King L."/>
            <person name="Bahret A."/>
            <person name="Miller B."/>
            <person name="Marra M.A."/>
            <person name="Martienssen R."/>
            <person name="McCombie W.R."/>
            <person name="Wilson R.K."/>
            <person name="Murphy G."/>
            <person name="Bancroft I."/>
            <person name="Volckaert G."/>
            <person name="Wambutt R."/>
            <person name="Duesterhoeft A."/>
            <person name="Stiekema W."/>
            <person name="Pohl T."/>
            <person name="Entian K.-D."/>
            <person name="Terryn N."/>
            <person name="Hartley N."/>
            <person name="Bent E."/>
            <person name="Johnson S."/>
            <person name="Langham S.-A."/>
            <person name="McCullagh B."/>
            <person name="Robben J."/>
            <person name="Grymonprez B."/>
            <person name="Zimmermann W."/>
            <person name="Ramsperger U."/>
            <person name="Wedler H."/>
            <person name="Balke K."/>
            <person name="Wedler E."/>
            <person name="Peters S."/>
            <person name="van Staveren M."/>
            <person name="Dirkse W."/>
            <person name="Mooijman P."/>
            <person name="Klein Lankhorst R."/>
            <person name="Weitzenegger T."/>
            <person name="Bothe G."/>
            <person name="Rose M."/>
            <person name="Hauf J."/>
            <person name="Berneiser S."/>
            <person name="Hempel S."/>
            <person name="Feldpausch M."/>
            <person name="Lamberth S."/>
            <person name="Villarroel R."/>
            <person name="Gielen J."/>
            <person name="Ardiles W."/>
            <person name="Bents O."/>
            <person name="Lemcke K."/>
            <person name="Kolesov G."/>
            <person name="Mayer K.F.X."/>
            <person name="Rudd S."/>
            <person name="Schoof H."/>
            <person name="Schueller C."/>
            <person name="Zaccaria P."/>
            <person name="Mewes H.-W."/>
            <person name="Bevan M."/>
            <person name="Fransz P.F."/>
        </authorList>
    </citation>
    <scope>NUCLEOTIDE SEQUENCE [LARGE SCALE GENOMIC DNA]</scope>
    <source>
        <strain>cv. Columbia</strain>
    </source>
</reference>
<reference key="2">
    <citation type="journal article" date="2017" name="Plant J.">
        <title>Araport11: a complete reannotation of the Arabidopsis thaliana reference genome.</title>
        <authorList>
            <person name="Cheng C.Y."/>
            <person name="Krishnakumar V."/>
            <person name="Chan A.P."/>
            <person name="Thibaud-Nissen F."/>
            <person name="Schobel S."/>
            <person name="Town C.D."/>
        </authorList>
    </citation>
    <scope>GENOME REANNOTATION</scope>
    <source>
        <strain>cv. Columbia</strain>
    </source>
</reference>
<reference key="3">
    <citation type="journal article" date="2003" name="Science">
        <title>Empirical analysis of transcriptional activity in the Arabidopsis genome.</title>
        <authorList>
            <person name="Yamada K."/>
            <person name="Lim J."/>
            <person name="Dale J.M."/>
            <person name="Chen H."/>
            <person name="Shinn P."/>
            <person name="Palm C.J."/>
            <person name="Southwick A.M."/>
            <person name="Wu H.C."/>
            <person name="Kim C.J."/>
            <person name="Nguyen M."/>
            <person name="Pham P.K."/>
            <person name="Cheuk R.F."/>
            <person name="Karlin-Newmann G."/>
            <person name="Liu S.X."/>
            <person name="Lam B."/>
            <person name="Sakano H."/>
            <person name="Wu T."/>
            <person name="Yu G."/>
            <person name="Miranda M."/>
            <person name="Quach H.L."/>
            <person name="Tripp M."/>
            <person name="Chang C.H."/>
            <person name="Lee J.M."/>
            <person name="Toriumi M.J."/>
            <person name="Chan M.M."/>
            <person name="Tang C.C."/>
            <person name="Onodera C.S."/>
            <person name="Deng J.M."/>
            <person name="Akiyama K."/>
            <person name="Ansari Y."/>
            <person name="Arakawa T."/>
            <person name="Banh J."/>
            <person name="Banno F."/>
            <person name="Bowser L."/>
            <person name="Brooks S.Y."/>
            <person name="Carninci P."/>
            <person name="Chao Q."/>
            <person name="Choy N."/>
            <person name="Enju A."/>
            <person name="Goldsmith A.D."/>
            <person name="Gurjal M."/>
            <person name="Hansen N.F."/>
            <person name="Hayashizaki Y."/>
            <person name="Johnson-Hopson C."/>
            <person name="Hsuan V.W."/>
            <person name="Iida K."/>
            <person name="Karnes M."/>
            <person name="Khan S."/>
            <person name="Koesema E."/>
            <person name="Ishida J."/>
            <person name="Jiang P.X."/>
            <person name="Jones T."/>
            <person name="Kawai J."/>
            <person name="Kamiya A."/>
            <person name="Meyers C."/>
            <person name="Nakajima M."/>
            <person name="Narusaka M."/>
            <person name="Seki M."/>
            <person name="Sakurai T."/>
            <person name="Satou M."/>
            <person name="Tamse R."/>
            <person name="Vaysberg M."/>
            <person name="Wallender E.K."/>
            <person name="Wong C."/>
            <person name="Yamamura Y."/>
            <person name="Yuan S."/>
            <person name="Shinozaki K."/>
            <person name="Davis R.W."/>
            <person name="Theologis A."/>
            <person name="Ecker J.R."/>
        </authorList>
    </citation>
    <scope>NUCLEOTIDE SEQUENCE [LARGE SCALE MRNA]</scope>
    <source>
        <strain>cv. Columbia</strain>
    </source>
</reference>
<reference key="4">
    <citation type="journal article" date="2003" name="J. Mol. Evol.">
        <title>The carboxylesterase gene family from Arabidopsis thaliana.</title>
        <authorList>
            <person name="Marshall S.D."/>
            <person name="Putterill J.J."/>
            <person name="Plummer K.M."/>
            <person name="Newcomb R.D."/>
        </authorList>
    </citation>
    <scope>TISSUE SPECIFICITY</scope>
    <scope>GENE FAMILY</scope>
</reference>
<reference key="5">
    <citation type="journal article" date="2006" name="Plant Cell">
        <title>Genetic characterization and functional analysis of the GID1 gibberellin receptors in Arabidopsis.</title>
        <authorList>
            <person name="Griffiths J."/>
            <person name="Murase K."/>
            <person name="Rieu I."/>
            <person name="Zentella R."/>
            <person name="Zhang Z.L."/>
            <person name="Powers S.J."/>
            <person name="Gong F."/>
            <person name="Phillips A.L."/>
            <person name="Hedden P."/>
            <person name="Sun T.P."/>
            <person name="Thomas S.G."/>
        </authorList>
    </citation>
    <scope>FUNCTION</scope>
    <scope>INTERACTION WITH GAI AND RGA</scope>
    <scope>DISRUPTION PHENOTYPE</scope>
</reference>
<reference key="6">
    <citation type="journal article" date="2006" name="Plant J.">
        <title>Identification and characterization of Arabidopsis gibberellin receptors.</title>
        <authorList>
            <person name="Nakajima M."/>
            <person name="Shimada A."/>
            <person name="Takashi Y."/>
            <person name="Kim Y.C."/>
            <person name="Park S.H."/>
            <person name="Ueguchi-Tanaka M."/>
            <person name="Suzuki H."/>
            <person name="Katoh E."/>
            <person name="Iuchi S."/>
            <person name="Kobayashi M."/>
            <person name="Maeda T."/>
            <person name="Matsuoka M."/>
            <person name="Yamaguchi I."/>
        </authorList>
    </citation>
    <scope>FUNCTION</scope>
    <scope>INTERACTION WITH GAI; RGA; RGL1; RGL2 AND RGL3</scope>
</reference>
<reference key="7">
    <citation type="journal article" date="2007" name="Plant J.">
        <title>Multiple loss-of-function of Arabidopsis gibberellin receptor AtGID1s completely shuts down a gibberellin signal.</title>
        <authorList>
            <person name="Iuchi S."/>
            <person name="Suzuki H."/>
            <person name="Kim Y.C."/>
            <person name="Iuchi A."/>
            <person name="Kuromori T."/>
            <person name="Ueguchi-Tanaka M."/>
            <person name="Asami T."/>
            <person name="Yamaguchi I."/>
            <person name="Matsuoka M."/>
            <person name="Kobayashi M."/>
            <person name="Nakajima M."/>
        </authorList>
    </citation>
    <scope>FUNCTION</scope>
    <scope>DISRUPTION PHENOTYPE</scope>
</reference>
<reference key="8">
    <citation type="journal article" date="2009" name="Plant J.">
        <title>Differential expression and affinities of Arabidopsis gibberellin receptors can explain variation in phenotypes of multiple knock-out mutants.</title>
        <authorList>
            <person name="Suzuki H."/>
            <person name="Park S.-H."/>
            <person name="Okubo K."/>
            <person name="Kitamura J."/>
            <person name="Ueguchi-Tanaka M."/>
            <person name="Iuchi S."/>
            <person name="Katoh E."/>
            <person name="Kobayashi M."/>
            <person name="Yamaguchi I."/>
            <person name="Matsuoka M."/>
            <person name="Asami T."/>
            <person name="Nakajima M."/>
        </authorList>
    </citation>
    <scope>INTERACTION WITH RGL2</scope>
</reference>
<comment type="function">
    <text evidence="8 9 10">Functions as a soluble gibberellin (GA) receptor. GA is an essential hormone that regulates growth and development in plants. Binds with high affinity the biologically active gibberellin GA4, but has no affinity for the biologically inactive GAs. In response to GA, interacts with specific DELLA proteins, known as repressors of GA-induced growth, and targets them for degradation via proteasome. Seems to be required for GA signaling that controls root growth, seed germination and stem elongation. Partially redundant with GID1A and GID1B.</text>
</comment>
<comment type="subunit">
    <text evidence="8 9 11">Interacts with the DELLA proteins GAI, RGA, RGL1, RGL2 and RGL3 in a GA-dependent manner.</text>
</comment>
<comment type="interaction">
    <interactant intactId="EBI-963794">
        <id>Q940G6</id>
    </interactant>
    <interactant intactId="EBI-963606">
        <id>Q9LQT8</id>
        <label>GAI</label>
    </interactant>
    <organismsDiffer>false</organismsDiffer>
    <experiments>8</experiments>
</comment>
<comment type="interaction">
    <interactant intactId="EBI-963794">
        <id>Q940G6</id>
    </interactant>
    <interactant intactId="EBI-1238145">
        <id>Q9SYP2</id>
        <label>PFP-ALPHA1</label>
    </interactant>
    <organismsDiffer>false</organismsDiffer>
    <experiments>3</experiments>
</comment>
<comment type="interaction">
    <interactant intactId="EBI-963794">
        <id>Q940G6</id>
    </interactant>
    <interactant intactId="EBI-963624">
        <id>Q9SLH3</id>
        <label>RGA</label>
    </interactant>
    <organismsDiffer>false</organismsDiffer>
    <experiments>11</experiments>
</comment>
<comment type="interaction">
    <interactant intactId="EBI-963794">
        <id>Q940G6</id>
    </interactant>
    <interactant intactId="EBI-963647">
        <id>Q9C8Y3</id>
        <label>RGL1</label>
    </interactant>
    <organismsDiffer>false</organismsDiffer>
    <experiments>6</experiments>
</comment>
<comment type="interaction">
    <interactant intactId="EBI-963794">
        <id>Q940G6</id>
    </interactant>
    <interactant intactId="EBI-963665">
        <id>Q8GXW1</id>
        <label>RGL2</label>
    </interactant>
    <organismsDiffer>false</organismsDiffer>
    <experiments>6</experiments>
</comment>
<comment type="interaction">
    <interactant intactId="EBI-963794">
        <id>Q940G6</id>
    </interactant>
    <interactant intactId="EBI-15681313">
        <id>Q9LF53</id>
        <label>RGL3</label>
    </interactant>
    <organismsDiffer>false</organismsDiffer>
    <experiments>4</experiments>
</comment>
<comment type="interaction">
    <interactant intactId="EBI-963794">
        <id>Q940G6</id>
    </interactant>
    <interactant intactId="EBI-1806244">
        <id>O64722</id>
        <label>ZHD3</label>
    </interactant>
    <organismsDiffer>false</organismsDiffer>
    <experiments>3</experiments>
</comment>
<comment type="subcellular location">
    <subcellularLocation>
        <location evidence="1">Nucleus</location>
    </subcellularLocation>
</comment>
<comment type="tissue specificity">
    <text evidence="7">Widely expressed.</text>
</comment>
<comment type="disruption phenotype">
    <text evidence="9 10">No visible phenotype under normal growth condition.</text>
</comment>
<comment type="similarity">
    <text evidence="12">Belongs to the 'GDXG' lipolytic enzyme family.</text>
</comment>
<gene>
    <name type="primary">GID1C</name>
    <name type="synonym">CXE19</name>
    <name type="synonym">GID1L3</name>
    <name type="ordered locus">At5g27320</name>
    <name type="ORF">F21A20.30</name>
</gene>
<feature type="initiator methionine" description="Removed" evidence="4">
    <location>
        <position position="1"/>
    </location>
</feature>
<feature type="chain" id="PRO_0000071560" description="Gibberellin receptor GID1C">
    <location>
        <begin position="2"/>
        <end position="344"/>
    </location>
</feature>
<feature type="short sequence motif" description="Involved in the stabilization of the negatively charged intermediate by the formation of the oxyanion hole" evidence="3">
    <location>
        <begin position="111"/>
        <end position="113"/>
    </location>
</feature>
<feature type="active site" evidence="2 6">
    <location>
        <position position="189"/>
    </location>
</feature>
<feature type="active site" evidence="2 6">
    <location>
        <position position="287"/>
    </location>
</feature>
<feature type="binding site" evidence="5">
    <location>
        <begin position="113"/>
        <end position="114"/>
    </location>
    <ligand>
        <name>gibberellin A4</name>
        <dbReference type="ChEBI" id="CHEBI:73251"/>
    </ligand>
</feature>
<feature type="binding site" evidence="5">
    <location>
        <position position="114"/>
    </location>
    <ligand>
        <name>gibberellin A3</name>
        <dbReference type="ChEBI" id="CHEBI:58590"/>
    </ligand>
</feature>
<feature type="binding site" evidence="5">
    <location>
        <position position="125"/>
    </location>
    <ligand>
        <name>gibberellin A3</name>
        <dbReference type="ChEBI" id="CHEBI:58590"/>
    </ligand>
</feature>
<feature type="binding site" evidence="5">
    <location>
        <position position="125"/>
    </location>
    <ligand>
        <name>gibberellin A4</name>
        <dbReference type="ChEBI" id="CHEBI:73251"/>
    </ligand>
</feature>
<feature type="binding site" evidence="5">
    <location>
        <position position="189"/>
    </location>
    <ligand>
        <name>gibberellin A3</name>
        <dbReference type="ChEBI" id="CHEBI:58590"/>
    </ligand>
</feature>
<feature type="binding site" evidence="5">
    <location>
        <position position="189"/>
    </location>
    <ligand>
        <name>gibberellin A4</name>
        <dbReference type="ChEBI" id="CHEBI:73251"/>
    </ligand>
</feature>
<feature type="binding site" evidence="5">
    <location>
        <position position="236"/>
    </location>
    <ligand>
        <name>gibberellin A3</name>
        <dbReference type="ChEBI" id="CHEBI:58590"/>
    </ligand>
</feature>
<feature type="binding site" evidence="5">
    <location>
        <position position="318"/>
    </location>
    <ligand>
        <name>gibberellin A3</name>
        <dbReference type="ChEBI" id="CHEBI:58590"/>
    </ligand>
</feature>
<feature type="binding site" evidence="5">
    <location>
        <position position="318"/>
    </location>
    <ligand>
        <name>gibberellin A4</name>
        <dbReference type="ChEBI" id="CHEBI:73251"/>
    </ligand>
</feature>
<feature type="modified residue" description="N-acetylalanine" evidence="4">
    <location>
        <position position="2"/>
    </location>
</feature>
<keyword id="KW-0007">Acetylation</keyword>
<keyword id="KW-0939">Gibberellin signaling pathway</keyword>
<keyword id="KW-0378">Hydrolase</keyword>
<keyword id="KW-0539">Nucleus</keyword>
<keyword id="KW-0675">Receptor</keyword>
<keyword id="KW-1185">Reference proteome</keyword>
<sequence>MAGSEEVNLIESKTVVPLNTWVLISNFKLAYNLLRRPDGTFNRHLAEFLDRKVPANANPVNGVFSFDVIIDRQTNLLSRVYRPADAGTSPSITDLQNPVDGEIVPVIVFFHGGSFAHSSANSAIYDTLCRRLVGLCGAVVVSVNYRRAPENRYPCAYDDGWAVLKWVNSSSWLRSKKDSKVRIFLAGDSSGGNIVHNVAVRAVESRIDVLGNILLNPMFGGTERTESEKRLDGKYFVTVRDRDWYWRAFLPEGEDREHPACSPFGPRSKSLEGLSFPKSLVVVAGLDLIQDWQLKYAEGLKKAGQEVKLLYLEQATIGFYLLPNNNHFHTVMDEIAAFVNAECQ</sequence>
<evidence type="ECO:0000250" key="1"/>
<evidence type="ECO:0000250" key="2">
    <source>
        <dbReference type="UniProtKB" id="Q0ZPV7"/>
    </source>
</evidence>
<evidence type="ECO:0000250" key="3">
    <source>
        <dbReference type="UniProtKB" id="Q5NUF3"/>
    </source>
</evidence>
<evidence type="ECO:0000250" key="4">
    <source>
        <dbReference type="UniProtKB" id="Q9LT10"/>
    </source>
</evidence>
<evidence type="ECO:0000250" key="5">
    <source>
        <dbReference type="UniProtKB" id="Q9MAA7"/>
    </source>
</evidence>
<evidence type="ECO:0000255" key="6">
    <source>
        <dbReference type="PROSITE-ProRule" id="PRU10038"/>
    </source>
</evidence>
<evidence type="ECO:0000269" key="7">
    <source>
    </source>
</evidence>
<evidence type="ECO:0000269" key="8">
    <source>
    </source>
</evidence>
<evidence type="ECO:0000269" key="9">
    <source>
    </source>
</evidence>
<evidence type="ECO:0000269" key="10">
    <source>
    </source>
</evidence>
<evidence type="ECO:0000269" key="11">
    <source>
    </source>
</evidence>
<evidence type="ECO:0000305" key="12"/>
<dbReference type="EC" id="3.-.-.-"/>
<dbReference type="EMBL" id="AC007123">
    <property type="status" value="NOT_ANNOTATED_CDS"/>
    <property type="molecule type" value="Genomic_DNA"/>
</dbReference>
<dbReference type="EMBL" id="CP002688">
    <property type="protein sequence ID" value="AED93672.1"/>
    <property type="molecule type" value="Genomic_DNA"/>
</dbReference>
<dbReference type="EMBL" id="AY054653">
    <property type="protein sequence ID" value="AAK96844.1"/>
    <property type="molecule type" value="mRNA"/>
</dbReference>
<dbReference type="EMBL" id="AY128729">
    <property type="protein sequence ID" value="AAM91129.1"/>
    <property type="molecule type" value="mRNA"/>
</dbReference>
<dbReference type="RefSeq" id="NP_198084.1">
    <property type="nucleotide sequence ID" value="NM_122614.4"/>
</dbReference>
<dbReference type="SMR" id="Q940G6"/>
<dbReference type="BioGRID" id="18064">
    <property type="interactions" value="9"/>
</dbReference>
<dbReference type="DIP" id="DIP-37663N"/>
<dbReference type="FunCoup" id="Q940G6">
    <property type="interactions" value="474"/>
</dbReference>
<dbReference type="IntAct" id="Q940G6">
    <property type="interactions" value="8"/>
</dbReference>
<dbReference type="STRING" id="3702.Q940G6"/>
<dbReference type="ESTHER" id="arath-AT5G27320">
    <property type="family name" value="Plant_carboxylesterase"/>
</dbReference>
<dbReference type="MEROPS" id="S09.A10"/>
<dbReference type="PaxDb" id="3702-AT5G27320.1"/>
<dbReference type="ProteomicsDB" id="222348"/>
<dbReference type="EnsemblPlants" id="AT5G27320.1">
    <property type="protein sequence ID" value="AT5G27320.1"/>
    <property type="gene ID" value="AT5G27320"/>
</dbReference>
<dbReference type="GeneID" id="832790"/>
<dbReference type="Gramene" id="AT5G27320.1">
    <property type="protein sequence ID" value="AT5G27320.1"/>
    <property type="gene ID" value="AT5G27320"/>
</dbReference>
<dbReference type="KEGG" id="ath:AT5G27320"/>
<dbReference type="Araport" id="AT5G27320"/>
<dbReference type="TAIR" id="AT5G27320">
    <property type="gene designation" value="GID1C"/>
</dbReference>
<dbReference type="eggNOG" id="KOG1515">
    <property type="taxonomic scope" value="Eukaryota"/>
</dbReference>
<dbReference type="HOGENOM" id="CLU_012494_22_1_1"/>
<dbReference type="InParanoid" id="Q940G6"/>
<dbReference type="OMA" id="CRNAVET"/>
<dbReference type="OrthoDB" id="408631at2759"/>
<dbReference type="PhylomeDB" id="Q940G6"/>
<dbReference type="BioCyc" id="ARA:AT5G27320-MONOMER"/>
<dbReference type="PRO" id="PR:Q940G6"/>
<dbReference type="Proteomes" id="UP000006548">
    <property type="component" value="Chromosome 5"/>
</dbReference>
<dbReference type="ExpressionAtlas" id="Q940G6">
    <property type="expression patterns" value="baseline and differential"/>
</dbReference>
<dbReference type="GO" id="GO:0005634">
    <property type="term" value="C:nucleus"/>
    <property type="evidence" value="ECO:0007669"/>
    <property type="project" value="UniProtKB-SubCell"/>
</dbReference>
<dbReference type="GO" id="GO:0016787">
    <property type="term" value="F:hydrolase activity"/>
    <property type="evidence" value="ECO:0007669"/>
    <property type="project" value="UniProtKB-KW"/>
</dbReference>
<dbReference type="GO" id="GO:0048444">
    <property type="term" value="P:floral organ morphogenesis"/>
    <property type="evidence" value="ECO:0000316"/>
    <property type="project" value="TAIR"/>
</dbReference>
<dbReference type="GO" id="GO:0048530">
    <property type="term" value="P:fruit morphogenesis"/>
    <property type="evidence" value="ECO:0000316"/>
    <property type="project" value="CAFA"/>
</dbReference>
<dbReference type="GO" id="GO:0010476">
    <property type="term" value="P:gibberellin mediated signaling pathway"/>
    <property type="evidence" value="ECO:0000316"/>
    <property type="project" value="TAIR"/>
</dbReference>
<dbReference type="GO" id="GO:0010629">
    <property type="term" value="P:negative regulation of gene expression"/>
    <property type="evidence" value="ECO:0000316"/>
    <property type="project" value="CAFA"/>
</dbReference>
<dbReference type="GO" id="GO:0009939">
    <property type="term" value="P:positive regulation of gibberellic acid mediated signaling pathway"/>
    <property type="evidence" value="ECO:0000316"/>
    <property type="project" value="TAIR"/>
</dbReference>
<dbReference type="GO" id="GO:0009739">
    <property type="term" value="P:response to gibberellin"/>
    <property type="evidence" value="ECO:0000316"/>
    <property type="project" value="CAFA"/>
</dbReference>
<dbReference type="FunFam" id="3.40.50.1820:FF:000087">
    <property type="entry name" value="Gibberellin receptor GID1"/>
    <property type="match status" value="1"/>
</dbReference>
<dbReference type="Gene3D" id="3.40.50.1820">
    <property type="entry name" value="alpha/beta hydrolase"/>
    <property type="match status" value="1"/>
</dbReference>
<dbReference type="InterPro" id="IPR013094">
    <property type="entry name" value="AB_hydrolase_3"/>
</dbReference>
<dbReference type="InterPro" id="IPR029058">
    <property type="entry name" value="AB_hydrolase_fold"/>
</dbReference>
<dbReference type="InterPro" id="IPR050466">
    <property type="entry name" value="Carboxylest/Gibb_receptor"/>
</dbReference>
<dbReference type="InterPro" id="IPR002168">
    <property type="entry name" value="Lipase_GDXG_HIS_AS"/>
</dbReference>
<dbReference type="InterPro" id="IPR033140">
    <property type="entry name" value="Lipase_GDXG_put_SER_AS"/>
</dbReference>
<dbReference type="PANTHER" id="PTHR23024">
    <property type="entry name" value="ARYLACETAMIDE DEACETYLASE"/>
    <property type="match status" value="1"/>
</dbReference>
<dbReference type="PANTHER" id="PTHR23024:SF492">
    <property type="entry name" value="GIBBERELLIN RECEPTOR GID1C"/>
    <property type="match status" value="1"/>
</dbReference>
<dbReference type="Pfam" id="PF07859">
    <property type="entry name" value="Abhydrolase_3"/>
    <property type="match status" value="1"/>
</dbReference>
<dbReference type="SUPFAM" id="SSF53474">
    <property type="entry name" value="alpha/beta-Hydrolases"/>
    <property type="match status" value="1"/>
</dbReference>
<dbReference type="PROSITE" id="PS01173">
    <property type="entry name" value="LIPASE_GDXG_HIS"/>
    <property type="match status" value="1"/>
</dbReference>
<dbReference type="PROSITE" id="PS01174">
    <property type="entry name" value="LIPASE_GDXG_SER"/>
    <property type="match status" value="1"/>
</dbReference>
<name>GID1C_ARATH</name>
<proteinExistence type="evidence at protein level"/>
<protein>
    <recommendedName>
        <fullName>Gibberellin receptor GID1C</fullName>
        <ecNumber>3.-.-.-</ecNumber>
    </recommendedName>
    <alternativeName>
        <fullName>AtCXE19</fullName>
    </alternativeName>
    <alternativeName>
        <fullName>Carboxylesterase 19</fullName>
    </alternativeName>
    <alternativeName>
        <fullName>GID1-like protein 3</fullName>
    </alternativeName>
    <alternativeName>
        <fullName>Protein GA INSENSITIVE DWARF 1C</fullName>
        <shortName>AtGID1C</shortName>
    </alternativeName>
</protein>
<organism>
    <name type="scientific">Arabidopsis thaliana</name>
    <name type="common">Mouse-ear cress</name>
    <dbReference type="NCBI Taxonomy" id="3702"/>
    <lineage>
        <taxon>Eukaryota</taxon>
        <taxon>Viridiplantae</taxon>
        <taxon>Streptophyta</taxon>
        <taxon>Embryophyta</taxon>
        <taxon>Tracheophyta</taxon>
        <taxon>Spermatophyta</taxon>
        <taxon>Magnoliopsida</taxon>
        <taxon>eudicotyledons</taxon>
        <taxon>Gunneridae</taxon>
        <taxon>Pentapetalae</taxon>
        <taxon>rosids</taxon>
        <taxon>malvids</taxon>
        <taxon>Brassicales</taxon>
        <taxon>Brassicaceae</taxon>
        <taxon>Camelineae</taxon>
        <taxon>Arabidopsis</taxon>
    </lineage>
</organism>